<dbReference type="EC" id="6.1.1.15" evidence="1"/>
<dbReference type="EMBL" id="CP001150">
    <property type="protein sequence ID" value="ACM01998.1"/>
    <property type="molecule type" value="Genomic_DNA"/>
</dbReference>
<dbReference type="RefSeq" id="WP_011841663.1">
    <property type="nucleotide sequence ID" value="NC_011963.1"/>
</dbReference>
<dbReference type="SMR" id="B9KLX3"/>
<dbReference type="GeneID" id="67447530"/>
<dbReference type="KEGG" id="rsk:RSKD131_2138"/>
<dbReference type="HOGENOM" id="CLU_016739_4_2_5"/>
<dbReference type="GO" id="GO:0005829">
    <property type="term" value="C:cytosol"/>
    <property type="evidence" value="ECO:0007669"/>
    <property type="project" value="TreeGrafter"/>
</dbReference>
<dbReference type="GO" id="GO:0005524">
    <property type="term" value="F:ATP binding"/>
    <property type="evidence" value="ECO:0007669"/>
    <property type="project" value="UniProtKB-UniRule"/>
</dbReference>
<dbReference type="GO" id="GO:0004827">
    <property type="term" value="F:proline-tRNA ligase activity"/>
    <property type="evidence" value="ECO:0007669"/>
    <property type="project" value="UniProtKB-UniRule"/>
</dbReference>
<dbReference type="GO" id="GO:0006433">
    <property type="term" value="P:prolyl-tRNA aminoacylation"/>
    <property type="evidence" value="ECO:0007669"/>
    <property type="project" value="UniProtKB-UniRule"/>
</dbReference>
<dbReference type="CDD" id="cd00861">
    <property type="entry name" value="ProRS_anticodon_short"/>
    <property type="match status" value="1"/>
</dbReference>
<dbReference type="CDD" id="cd00779">
    <property type="entry name" value="ProRS_core_prok"/>
    <property type="match status" value="1"/>
</dbReference>
<dbReference type="FunFam" id="3.30.930.10:FF:000042">
    <property type="entry name" value="probable proline--tRNA ligase, mitochondrial"/>
    <property type="match status" value="1"/>
</dbReference>
<dbReference type="FunFam" id="3.40.50.800:FF:000032">
    <property type="entry name" value="Proline--tRNA ligase"/>
    <property type="match status" value="1"/>
</dbReference>
<dbReference type="Gene3D" id="3.40.50.800">
    <property type="entry name" value="Anticodon-binding domain"/>
    <property type="match status" value="1"/>
</dbReference>
<dbReference type="Gene3D" id="3.30.930.10">
    <property type="entry name" value="Bira Bifunctional Protein, Domain 2"/>
    <property type="match status" value="1"/>
</dbReference>
<dbReference type="HAMAP" id="MF_01570">
    <property type="entry name" value="Pro_tRNA_synth_type2"/>
    <property type="match status" value="1"/>
</dbReference>
<dbReference type="InterPro" id="IPR002314">
    <property type="entry name" value="aa-tRNA-synt_IIb"/>
</dbReference>
<dbReference type="InterPro" id="IPR006195">
    <property type="entry name" value="aa-tRNA-synth_II"/>
</dbReference>
<dbReference type="InterPro" id="IPR045864">
    <property type="entry name" value="aa-tRNA-synth_II/BPL/LPL"/>
</dbReference>
<dbReference type="InterPro" id="IPR004154">
    <property type="entry name" value="Anticodon-bd"/>
</dbReference>
<dbReference type="InterPro" id="IPR036621">
    <property type="entry name" value="Anticodon-bd_dom_sf"/>
</dbReference>
<dbReference type="InterPro" id="IPR002316">
    <property type="entry name" value="Pro-tRNA-ligase_IIa"/>
</dbReference>
<dbReference type="InterPro" id="IPR050062">
    <property type="entry name" value="Pro-tRNA_synthetase"/>
</dbReference>
<dbReference type="InterPro" id="IPR023716">
    <property type="entry name" value="Prolyl-tRNA_ligase_IIa_type2"/>
</dbReference>
<dbReference type="InterPro" id="IPR044140">
    <property type="entry name" value="ProRS_anticodon_short"/>
</dbReference>
<dbReference type="InterPro" id="IPR033730">
    <property type="entry name" value="ProRS_core_prok"/>
</dbReference>
<dbReference type="NCBIfam" id="NF008979">
    <property type="entry name" value="PRK12325.1"/>
    <property type="match status" value="1"/>
</dbReference>
<dbReference type="PANTHER" id="PTHR42753">
    <property type="entry name" value="MITOCHONDRIAL RIBOSOME PROTEIN L39/PROLYL-TRNA LIGASE FAMILY MEMBER"/>
    <property type="match status" value="1"/>
</dbReference>
<dbReference type="PANTHER" id="PTHR42753:SF2">
    <property type="entry name" value="PROLINE--TRNA LIGASE"/>
    <property type="match status" value="1"/>
</dbReference>
<dbReference type="Pfam" id="PF03129">
    <property type="entry name" value="HGTP_anticodon"/>
    <property type="match status" value="1"/>
</dbReference>
<dbReference type="Pfam" id="PF00587">
    <property type="entry name" value="tRNA-synt_2b"/>
    <property type="match status" value="1"/>
</dbReference>
<dbReference type="PRINTS" id="PR01046">
    <property type="entry name" value="TRNASYNTHPRO"/>
</dbReference>
<dbReference type="SUPFAM" id="SSF52954">
    <property type="entry name" value="Class II aaRS ABD-related"/>
    <property type="match status" value="1"/>
</dbReference>
<dbReference type="SUPFAM" id="SSF55681">
    <property type="entry name" value="Class II aaRS and biotin synthetases"/>
    <property type="match status" value="1"/>
</dbReference>
<dbReference type="PROSITE" id="PS50862">
    <property type="entry name" value="AA_TRNA_LIGASE_II"/>
    <property type="match status" value="1"/>
</dbReference>
<evidence type="ECO:0000255" key="1">
    <source>
        <dbReference type="HAMAP-Rule" id="MF_01570"/>
    </source>
</evidence>
<feature type="chain" id="PRO_1000185528" description="Proline--tRNA ligase">
    <location>
        <begin position="1"/>
        <end position="445"/>
    </location>
</feature>
<proteinExistence type="inferred from homology"/>
<comment type="function">
    <text evidence="1">Catalyzes the attachment of proline to tRNA(Pro) in a two-step reaction: proline is first activated by ATP to form Pro-AMP and then transferred to the acceptor end of tRNA(Pro).</text>
</comment>
<comment type="catalytic activity">
    <reaction evidence="1">
        <text>tRNA(Pro) + L-proline + ATP = L-prolyl-tRNA(Pro) + AMP + diphosphate</text>
        <dbReference type="Rhea" id="RHEA:14305"/>
        <dbReference type="Rhea" id="RHEA-COMP:9700"/>
        <dbReference type="Rhea" id="RHEA-COMP:9702"/>
        <dbReference type="ChEBI" id="CHEBI:30616"/>
        <dbReference type="ChEBI" id="CHEBI:33019"/>
        <dbReference type="ChEBI" id="CHEBI:60039"/>
        <dbReference type="ChEBI" id="CHEBI:78442"/>
        <dbReference type="ChEBI" id="CHEBI:78532"/>
        <dbReference type="ChEBI" id="CHEBI:456215"/>
        <dbReference type="EC" id="6.1.1.15"/>
    </reaction>
</comment>
<comment type="subunit">
    <text evidence="1">Homodimer.</text>
</comment>
<comment type="subcellular location">
    <subcellularLocation>
        <location evidence="1">Cytoplasm</location>
    </subcellularLocation>
</comment>
<comment type="similarity">
    <text evidence="1">Belongs to the class-II aminoacyl-tRNA synthetase family. ProS type 2 subfamily.</text>
</comment>
<name>SYP_CERSK</name>
<sequence>MRLSRYFLPVLKENPSEAQIVSHRYMLRAGMIKQQAAGIYSWLPLGFKVLKRIEQIVHEEQIRAGHIPLLMPTLQPADLWRESGRYDDYGEEMLRITDRHKRDMLYGPTNEEMITDIFRSHVSSYKDLPLTLYHIQWKFRDEIRPRFGVMRGREFLMKDGYNFDLDYESAIHAYNRHMVSYLRTYERMGLQAIPMRAASGPIGGDNTHEFLVLASTGESEVFYDAAITDLKFGDRVVNYDDRAECEAIVKEWTAPYARTDETHDEAVFGQIPEERRRSSRGIEVGQIFYFGTKYSEPMGATVVTADGSRVPVHMGSHGIGVSRLLGAIIEASHDDKGIIWPEGVTPFHAGIVNLKQGDSSTDLACEALYRDLSARGLEPLYDDRDERAGAKFATMDLIGLPWRITVGPRGISAGKVELTNRRTGESEEMSSGAAVDRLAQIYAGI</sequence>
<organism>
    <name type="scientific">Cereibacter sphaeroides (strain KD131 / KCTC 12085)</name>
    <name type="common">Rhodobacter sphaeroides</name>
    <dbReference type="NCBI Taxonomy" id="557760"/>
    <lineage>
        <taxon>Bacteria</taxon>
        <taxon>Pseudomonadati</taxon>
        <taxon>Pseudomonadota</taxon>
        <taxon>Alphaproteobacteria</taxon>
        <taxon>Rhodobacterales</taxon>
        <taxon>Paracoccaceae</taxon>
        <taxon>Cereibacter</taxon>
    </lineage>
</organism>
<protein>
    <recommendedName>
        <fullName evidence="1">Proline--tRNA ligase</fullName>
        <ecNumber evidence="1">6.1.1.15</ecNumber>
    </recommendedName>
    <alternativeName>
        <fullName evidence="1">Prolyl-tRNA synthetase</fullName>
        <shortName evidence="1">ProRS</shortName>
    </alternativeName>
</protein>
<reference key="1">
    <citation type="journal article" date="2009" name="J. Bacteriol.">
        <title>Complete genome sequence of Rhodobacter sphaeroides KD131.</title>
        <authorList>
            <person name="Lim S.-K."/>
            <person name="Kim S.J."/>
            <person name="Cha S.H."/>
            <person name="Oh Y.-K."/>
            <person name="Rhee H.-J."/>
            <person name="Kim M.-S."/>
            <person name="Lee J.K."/>
        </authorList>
    </citation>
    <scope>NUCLEOTIDE SEQUENCE [LARGE SCALE GENOMIC DNA]</scope>
    <source>
        <strain>KD131 / KCTC 12085</strain>
    </source>
</reference>
<keyword id="KW-0030">Aminoacyl-tRNA synthetase</keyword>
<keyword id="KW-0067">ATP-binding</keyword>
<keyword id="KW-0963">Cytoplasm</keyword>
<keyword id="KW-0436">Ligase</keyword>
<keyword id="KW-0547">Nucleotide-binding</keyword>
<keyword id="KW-0648">Protein biosynthesis</keyword>
<gene>
    <name evidence="1" type="primary">proS</name>
    <name type="ordered locus">RSKD131_2138</name>
</gene>
<accession>B9KLX3</accession>